<protein>
    <recommendedName>
        <fullName evidence="1">Fumarate hydratase class II</fullName>
        <shortName evidence="1">Fumarase C</shortName>
        <ecNumber evidence="1">4.2.1.2</ecNumber>
    </recommendedName>
    <alternativeName>
        <fullName evidence="1">Aerobic fumarase</fullName>
    </alternativeName>
    <alternativeName>
        <fullName evidence="1">Iron-independent fumarase</fullName>
    </alternativeName>
</protein>
<proteinExistence type="inferred from homology"/>
<organism>
    <name type="scientific">Campylobacter jejuni subsp. jejuni serotype O:2 (strain ATCC 700819 / NCTC 11168)</name>
    <dbReference type="NCBI Taxonomy" id="192222"/>
    <lineage>
        <taxon>Bacteria</taxon>
        <taxon>Pseudomonadati</taxon>
        <taxon>Campylobacterota</taxon>
        <taxon>Epsilonproteobacteria</taxon>
        <taxon>Campylobacterales</taxon>
        <taxon>Campylobacteraceae</taxon>
        <taxon>Campylobacter</taxon>
    </lineage>
</organism>
<gene>
    <name evidence="1" type="primary">fumC</name>
    <name type="ordered locus">Cj1364c</name>
</gene>
<dbReference type="EC" id="4.2.1.2" evidence="1"/>
<dbReference type="EMBL" id="Y16882">
    <property type="protein sequence ID" value="CAA76499.1"/>
    <property type="molecule type" value="Genomic_DNA"/>
</dbReference>
<dbReference type="EMBL" id="AL111168">
    <property type="protein sequence ID" value="CAL35476.1"/>
    <property type="molecule type" value="Genomic_DNA"/>
</dbReference>
<dbReference type="PIR" id="A81281">
    <property type="entry name" value="A81281"/>
</dbReference>
<dbReference type="RefSeq" id="WP_002857888.1">
    <property type="nucleotide sequence ID" value="NZ_SZUC01000003.1"/>
</dbReference>
<dbReference type="RefSeq" id="YP_002344752.1">
    <property type="nucleotide sequence ID" value="NC_002163.1"/>
</dbReference>
<dbReference type="SMR" id="O69294"/>
<dbReference type="IntAct" id="O69294">
    <property type="interactions" value="10"/>
</dbReference>
<dbReference type="STRING" id="192222.Cj1364c"/>
<dbReference type="PaxDb" id="192222-Cj1364c"/>
<dbReference type="EnsemblBacteria" id="CAL35476">
    <property type="protein sequence ID" value="CAL35476"/>
    <property type="gene ID" value="Cj1364c"/>
</dbReference>
<dbReference type="GeneID" id="905657"/>
<dbReference type="KEGG" id="cje:Cj1364c"/>
<dbReference type="PATRIC" id="fig|192222.6.peg.1345"/>
<dbReference type="eggNOG" id="COG0114">
    <property type="taxonomic scope" value="Bacteria"/>
</dbReference>
<dbReference type="HOGENOM" id="CLU_021594_4_1_7"/>
<dbReference type="OrthoDB" id="9802809at2"/>
<dbReference type="UniPathway" id="UPA00223">
    <property type="reaction ID" value="UER01007"/>
</dbReference>
<dbReference type="Proteomes" id="UP000000799">
    <property type="component" value="Chromosome"/>
</dbReference>
<dbReference type="GO" id="GO:0005737">
    <property type="term" value="C:cytoplasm"/>
    <property type="evidence" value="ECO:0007669"/>
    <property type="project" value="UniProtKB-SubCell"/>
</dbReference>
<dbReference type="GO" id="GO:0004333">
    <property type="term" value="F:fumarate hydratase activity"/>
    <property type="evidence" value="ECO:0007669"/>
    <property type="project" value="UniProtKB-UniRule"/>
</dbReference>
<dbReference type="GO" id="GO:0006106">
    <property type="term" value="P:fumarate metabolic process"/>
    <property type="evidence" value="ECO:0007669"/>
    <property type="project" value="InterPro"/>
</dbReference>
<dbReference type="GO" id="GO:0006108">
    <property type="term" value="P:malate metabolic process"/>
    <property type="evidence" value="ECO:0007669"/>
    <property type="project" value="TreeGrafter"/>
</dbReference>
<dbReference type="GO" id="GO:0006099">
    <property type="term" value="P:tricarboxylic acid cycle"/>
    <property type="evidence" value="ECO:0007669"/>
    <property type="project" value="UniProtKB-UniRule"/>
</dbReference>
<dbReference type="CDD" id="cd01362">
    <property type="entry name" value="Fumarase_classII"/>
    <property type="match status" value="1"/>
</dbReference>
<dbReference type="FunFam" id="1.10.40.30:FF:000002">
    <property type="entry name" value="Fumarate hydratase class II"/>
    <property type="match status" value="1"/>
</dbReference>
<dbReference type="FunFam" id="1.10.275.10:FF:000001">
    <property type="entry name" value="Fumarate hydratase, mitochondrial"/>
    <property type="match status" value="1"/>
</dbReference>
<dbReference type="FunFam" id="1.20.200.10:FF:000001">
    <property type="entry name" value="Fumarate hydratase, mitochondrial"/>
    <property type="match status" value="1"/>
</dbReference>
<dbReference type="Gene3D" id="1.10.40.30">
    <property type="entry name" value="Fumarase/aspartase (C-terminal domain)"/>
    <property type="match status" value="1"/>
</dbReference>
<dbReference type="Gene3D" id="1.20.200.10">
    <property type="entry name" value="Fumarase/aspartase (Central domain)"/>
    <property type="match status" value="1"/>
</dbReference>
<dbReference type="Gene3D" id="1.10.275.10">
    <property type="entry name" value="Fumarase/aspartase (N-terminal domain)"/>
    <property type="match status" value="1"/>
</dbReference>
<dbReference type="HAMAP" id="MF_00743">
    <property type="entry name" value="FumaraseC"/>
    <property type="match status" value="1"/>
</dbReference>
<dbReference type="InterPro" id="IPR005677">
    <property type="entry name" value="Fum_hydII"/>
</dbReference>
<dbReference type="InterPro" id="IPR024083">
    <property type="entry name" value="Fumarase/histidase_N"/>
</dbReference>
<dbReference type="InterPro" id="IPR018951">
    <property type="entry name" value="Fumarase_C_C"/>
</dbReference>
<dbReference type="InterPro" id="IPR020557">
    <property type="entry name" value="Fumarate_lyase_CS"/>
</dbReference>
<dbReference type="InterPro" id="IPR000362">
    <property type="entry name" value="Fumarate_lyase_fam"/>
</dbReference>
<dbReference type="InterPro" id="IPR022761">
    <property type="entry name" value="Fumarate_lyase_N"/>
</dbReference>
<dbReference type="InterPro" id="IPR008948">
    <property type="entry name" value="L-Aspartase-like"/>
</dbReference>
<dbReference type="NCBIfam" id="TIGR00979">
    <property type="entry name" value="fumC_II"/>
    <property type="match status" value="1"/>
</dbReference>
<dbReference type="NCBIfam" id="NF008909">
    <property type="entry name" value="PRK12273.1"/>
    <property type="match status" value="1"/>
</dbReference>
<dbReference type="PANTHER" id="PTHR11444">
    <property type="entry name" value="ASPARTATEAMMONIA/ARGININOSUCCINATE/ADENYLOSUCCINATE LYASE"/>
    <property type="match status" value="1"/>
</dbReference>
<dbReference type="PANTHER" id="PTHR11444:SF1">
    <property type="entry name" value="FUMARATE HYDRATASE, MITOCHONDRIAL"/>
    <property type="match status" value="1"/>
</dbReference>
<dbReference type="Pfam" id="PF10415">
    <property type="entry name" value="FumaraseC_C"/>
    <property type="match status" value="1"/>
</dbReference>
<dbReference type="Pfam" id="PF00206">
    <property type="entry name" value="Lyase_1"/>
    <property type="match status" value="1"/>
</dbReference>
<dbReference type="PRINTS" id="PR00145">
    <property type="entry name" value="ARGSUCLYASE"/>
</dbReference>
<dbReference type="PRINTS" id="PR00149">
    <property type="entry name" value="FUMRATELYASE"/>
</dbReference>
<dbReference type="SUPFAM" id="SSF48557">
    <property type="entry name" value="L-aspartase-like"/>
    <property type="match status" value="1"/>
</dbReference>
<dbReference type="PROSITE" id="PS00163">
    <property type="entry name" value="FUMARATE_LYASES"/>
    <property type="match status" value="1"/>
</dbReference>
<feature type="chain" id="PRO_0000161263" description="Fumarate hydratase class II">
    <location>
        <begin position="1"/>
        <end position="463"/>
    </location>
</feature>
<feature type="active site" description="Proton donor/acceptor" evidence="1">
    <location>
        <position position="187"/>
    </location>
</feature>
<feature type="active site" evidence="1">
    <location>
        <position position="317"/>
    </location>
</feature>
<feature type="binding site" evidence="1">
    <location>
        <begin position="97"/>
        <end position="99"/>
    </location>
    <ligand>
        <name>substrate</name>
    </ligand>
</feature>
<feature type="binding site" description="in site B" evidence="1">
    <location>
        <begin position="128"/>
        <end position="131"/>
    </location>
    <ligand>
        <name>substrate</name>
    </ligand>
</feature>
<feature type="binding site" evidence="1">
    <location>
        <begin position="138"/>
        <end position="140"/>
    </location>
    <ligand>
        <name>substrate</name>
    </ligand>
</feature>
<feature type="binding site" evidence="1">
    <location>
        <position position="186"/>
    </location>
    <ligand>
        <name>substrate</name>
    </ligand>
</feature>
<feature type="binding site" evidence="1">
    <location>
        <position position="318"/>
    </location>
    <ligand>
        <name>substrate</name>
    </ligand>
</feature>
<feature type="binding site" evidence="1">
    <location>
        <begin position="323"/>
        <end position="325"/>
    </location>
    <ligand>
        <name>substrate</name>
    </ligand>
</feature>
<feature type="site" description="Important for catalytic activity" evidence="1">
    <location>
        <position position="330"/>
    </location>
</feature>
<reference key="1">
    <citation type="submission" date="1998-03" db="EMBL/GenBank/DDBJ databases">
        <authorList>
            <person name="Griffiths P.L."/>
            <person name="Connerton I.F."/>
        </authorList>
    </citation>
    <scope>NUCLEOTIDE SEQUENCE [GENOMIC DNA]</scope>
    <source>
        <strain>ATCC 700819 / NCTC 11168</strain>
    </source>
</reference>
<reference key="2">
    <citation type="journal article" date="2000" name="Nature">
        <title>The genome sequence of the food-borne pathogen Campylobacter jejuni reveals hypervariable sequences.</title>
        <authorList>
            <person name="Parkhill J."/>
            <person name="Wren B.W."/>
            <person name="Mungall K.L."/>
            <person name="Ketley J.M."/>
            <person name="Churcher C.M."/>
            <person name="Basham D."/>
            <person name="Chillingworth T."/>
            <person name="Davies R.M."/>
            <person name="Feltwell T."/>
            <person name="Holroyd S."/>
            <person name="Jagels K."/>
            <person name="Karlyshev A.V."/>
            <person name="Moule S."/>
            <person name="Pallen M.J."/>
            <person name="Penn C.W."/>
            <person name="Quail M.A."/>
            <person name="Rajandream M.A."/>
            <person name="Rutherford K.M."/>
            <person name="van Vliet A.H.M."/>
            <person name="Whitehead S."/>
            <person name="Barrell B.G."/>
        </authorList>
    </citation>
    <scope>NUCLEOTIDE SEQUENCE [LARGE SCALE GENOMIC DNA]</scope>
    <source>
        <strain>ATCC 700819 / NCTC 11168</strain>
    </source>
</reference>
<comment type="function">
    <text evidence="1">Involved in the TCA cycle. Catalyzes the stereospecific interconversion of fumarate to L-malate.</text>
</comment>
<comment type="catalytic activity">
    <reaction evidence="1">
        <text>(S)-malate = fumarate + H2O</text>
        <dbReference type="Rhea" id="RHEA:12460"/>
        <dbReference type="ChEBI" id="CHEBI:15377"/>
        <dbReference type="ChEBI" id="CHEBI:15589"/>
        <dbReference type="ChEBI" id="CHEBI:29806"/>
        <dbReference type="EC" id="4.2.1.2"/>
    </reaction>
</comment>
<comment type="pathway">
    <text evidence="1">Carbohydrate metabolism; tricarboxylic acid cycle; (S)-malate from fumarate: step 1/1.</text>
</comment>
<comment type="subunit">
    <text evidence="1">Homotetramer.</text>
</comment>
<comment type="subcellular location">
    <subcellularLocation>
        <location evidence="1">Cytoplasm</location>
    </subcellularLocation>
</comment>
<comment type="miscellaneous">
    <text evidence="1">There are 2 substrate-binding sites: the catalytic A site, and the non-catalytic B site that may play a role in the transfer of substrate or product between the active site and the solvent. Alternatively, the B site may bind allosteric effectors.</text>
</comment>
<comment type="similarity">
    <text evidence="1">Belongs to the class-II fumarase/aspartase family. Fumarase subfamily.</text>
</comment>
<name>FUMC_CAMJE</name>
<sequence>MEYRVEHDTMGEVKVPNDKYWGAQTERSFENFKIGCEKMPKVLIYAFANLKKSLALVNNKLGKLDDAKKNAIVQACDEIIAGKFDDNFPLAIWQTGSGTQSNMNMNEVIANRATEIMGGDFRKEKLVHPNDHVNMSQSSNDTFPTAMSIVAVEQVEKKLIPALDELIATFEKKVKEFDGIIKIGRTHLQDATPLTLAQEFSGYLSMLLHSKEQIIASLPTLRELAIGGTAVGTGLNAHPELSQKVSEELTQLIGTKFISSPNKFHALTSHDAINFTHGAMKGLAANLMKIANDIRWLASGPRCGLGELIIPENEPGSSIMPGKVNPTQCEAVTMVAVQVMGNDVAIGFAASQGNFELNVFKPVIIYNFLQSLDLLADSMHSFNIHCAVGIEPNRAKIDHNLHNSLMLVTALNPHIGYENAAKVAKNAHKKGISLKESTMELGLVSEEDFNKFVDPTKMIGPKA</sequence>
<keyword id="KW-0963">Cytoplasm</keyword>
<keyword id="KW-0456">Lyase</keyword>
<keyword id="KW-1185">Reference proteome</keyword>
<keyword id="KW-0816">Tricarboxylic acid cycle</keyword>
<accession>O69294</accession>
<accession>Q0P8P5</accession>
<evidence type="ECO:0000255" key="1">
    <source>
        <dbReference type="HAMAP-Rule" id="MF_00743"/>
    </source>
</evidence>